<feature type="signal peptide" evidence="2">
    <location>
        <begin position="1"/>
        <end position="18"/>
    </location>
</feature>
<feature type="chain" id="PRO_0000393158" description="Probable endo-1,4-beta-xylanase A">
    <location>
        <begin position="19"/>
        <end position="229"/>
    </location>
</feature>
<feature type="domain" description="GH11" evidence="3">
    <location>
        <begin position="41"/>
        <end position="229"/>
    </location>
</feature>
<feature type="active site" description="Nucleophile" evidence="4">
    <location>
        <position position="125"/>
    </location>
</feature>
<feature type="active site" description="Proton donor" evidence="5">
    <location>
        <position position="216"/>
    </location>
</feature>
<feature type="glycosylation site" description="N-linked (GlcNAc...) asparagine" evidence="2">
    <location>
        <position position="30"/>
    </location>
</feature>
<feature type="glycosylation site" description="N-linked (GlcNAc...) asparagine" evidence="2">
    <location>
        <position position="100"/>
    </location>
</feature>
<sequence>MVSFKYLFLAASALGALAAPVEVEESSWFNETALHEFAERAGTPSSTGWNNGYYYSFWTDNGGTVNYQNGNGGSYSVQWKDTGNFVGGKGWNPGSARTINYSGSFNPSGNAYLTVYGWTTNPLVEYYIVENYGTYNPGNGGTYRGSVYSDGANYNIYTATRYNAPSIEGDKTFTQYWSVRQSKRTGGTVTTANHFNAWAQLGMSLGTHNYQIVATEGYQSSGSSSITVY</sequence>
<evidence type="ECO:0000250" key="1"/>
<evidence type="ECO:0000255" key="2"/>
<evidence type="ECO:0000255" key="3">
    <source>
        <dbReference type="PROSITE-ProRule" id="PRU01097"/>
    </source>
</evidence>
<evidence type="ECO:0000255" key="4">
    <source>
        <dbReference type="PROSITE-ProRule" id="PRU10062"/>
    </source>
</evidence>
<evidence type="ECO:0000255" key="5">
    <source>
        <dbReference type="PROSITE-ProRule" id="PRU10063"/>
    </source>
</evidence>
<evidence type="ECO:0000305" key="6"/>
<dbReference type="EC" id="3.2.1.8"/>
<dbReference type="EMBL" id="DS027050">
    <property type="protein sequence ID" value="EAW12347.1"/>
    <property type="molecule type" value="Genomic_DNA"/>
</dbReference>
<dbReference type="RefSeq" id="XP_001273773.1">
    <property type="nucleotide sequence ID" value="XM_001273772.1"/>
</dbReference>
<dbReference type="SMR" id="A1CCU0"/>
<dbReference type="STRING" id="344612.A1CCU0"/>
<dbReference type="CAZy" id="GH11">
    <property type="family name" value="Glycoside Hydrolase Family 11"/>
</dbReference>
<dbReference type="GlyCosmos" id="A1CCU0">
    <property type="glycosylation" value="2 sites, No reported glycans"/>
</dbReference>
<dbReference type="EnsemblFungi" id="EAW12347">
    <property type="protein sequence ID" value="EAW12347"/>
    <property type="gene ID" value="ACLA_063140"/>
</dbReference>
<dbReference type="GeneID" id="4706056"/>
<dbReference type="KEGG" id="act:ACLA_063140"/>
<dbReference type="VEuPathDB" id="FungiDB:ACLA_063140"/>
<dbReference type="eggNOG" id="ENOG502RXA7">
    <property type="taxonomic scope" value="Eukaryota"/>
</dbReference>
<dbReference type="HOGENOM" id="CLU_052631_0_0_1"/>
<dbReference type="OMA" id="ISLYGWT"/>
<dbReference type="OrthoDB" id="2115822at2759"/>
<dbReference type="UniPathway" id="UPA00114"/>
<dbReference type="Proteomes" id="UP000006701">
    <property type="component" value="Unassembled WGS sequence"/>
</dbReference>
<dbReference type="GO" id="GO:0005576">
    <property type="term" value="C:extracellular region"/>
    <property type="evidence" value="ECO:0007669"/>
    <property type="project" value="UniProtKB-SubCell"/>
</dbReference>
<dbReference type="GO" id="GO:0031176">
    <property type="term" value="F:endo-1,4-beta-xylanase activity"/>
    <property type="evidence" value="ECO:0000250"/>
    <property type="project" value="UniProtKB"/>
</dbReference>
<dbReference type="GO" id="GO:0045493">
    <property type="term" value="P:xylan catabolic process"/>
    <property type="evidence" value="ECO:0000250"/>
    <property type="project" value="UniProtKB"/>
</dbReference>
<dbReference type="FunFam" id="2.60.120.180:FF:000001">
    <property type="entry name" value="Endo-1,4-beta-xylanase"/>
    <property type="match status" value="1"/>
</dbReference>
<dbReference type="Gene3D" id="2.60.120.180">
    <property type="match status" value="1"/>
</dbReference>
<dbReference type="InterPro" id="IPR013320">
    <property type="entry name" value="ConA-like_dom_sf"/>
</dbReference>
<dbReference type="InterPro" id="IPR013319">
    <property type="entry name" value="GH11/12"/>
</dbReference>
<dbReference type="InterPro" id="IPR018208">
    <property type="entry name" value="GH11_AS_1"/>
</dbReference>
<dbReference type="InterPro" id="IPR033119">
    <property type="entry name" value="GH11_AS_2"/>
</dbReference>
<dbReference type="InterPro" id="IPR033123">
    <property type="entry name" value="GH11_dom"/>
</dbReference>
<dbReference type="InterPro" id="IPR001137">
    <property type="entry name" value="Glyco_hydro_11"/>
</dbReference>
<dbReference type="PANTHER" id="PTHR46828">
    <property type="entry name" value="ENDO-1,4-BETA-XYLANASE A-RELATED"/>
    <property type="match status" value="1"/>
</dbReference>
<dbReference type="PANTHER" id="PTHR46828:SF2">
    <property type="entry name" value="ENDO-1,4-BETA-XYLANASE A-RELATED"/>
    <property type="match status" value="1"/>
</dbReference>
<dbReference type="Pfam" id="PF00457">
    <property type="entry name" value="Glyco_hydro_11"/>
    <property type="match status" value="1"/>
</dbReference>
<dbReference type="PRINTS" id="PR00911">
    <property type="entry name" value="GLHYDRLASE11"/>
</dbReference>
<dbReference type="SUPFAM" id="SSF49899">
    <property type="entry name" value="Concanavalin A-like lectins/glucanases"/>
    <property type="match status" value="1"/>
</dbReference>
<dbReference type="PROSITE" id="PS00776">
    <property type="entry name" value="GH11_1"/>
    <property type="match status" value="1"/>
</dbReference>
<dbReference type="PROSITE" id="PS00777">
    <property type="entry name" value="GH11_2"/>
    <property type="match status" value="1"/>
</dbReference>
<dbReference type="PROSITE" id="PS51761">
    <property type="entry name" value="GH11_3"/>
    <property type="match status" value="1"/>
</dbReference>
<keyword id="KW-0119">Carbohydrate metabolism</keyword>
<keyword id="KW-0325">Glycoprotein</keyword>
<keyword id="KW-0326">Glycosidase</keyword>
<keyword id="KW-0378">Hydrolase</keyword>
<keyword id="KW-0624">Polysaccharide degradation</keyword>
<keyword id="KW-1185">Reference proteome</keyword>
<keyword id="KW-0964">Secreted</keyword>
<keyword id="KW-0732">Signal</keyword>
<keyword id="KW-0858">Xylan degradation</keyword>
<organism>
    <name type="scientific">Aspergillus clavatus (strain ATCC 1007 / CBS 513.65 / DSM 816 / NCTC 3887 / NRRL 1 / QM 1276 / 107)</name>
    <dbReference type="NCBI Taxonomy" id="344612"/>
    <lineage>
        <taxon>Eukaryota</taxon>
        <taxon>Fungi</taxon>
        <taxon>Dikarya</taxon>
        <taxon>Ascomycota</taxon>
        <taxon>Pezizomycotina</taxon>
        <taxon>Eurotiomycetes</taxon>
        <taxon>Eurotiomycetidae</taxon>
        <taxon>Eurotiales</taxon>
        <taxon>Aspergillaceae</taxon>
        <taxon>Aspergillus</taxon>
        <taxon>Aspergillus subgen. Fumigati</taxon>
    </lineage>
</organism>
<protein>
    <recommendedName>
        <fullName>Probable endo-1,4-beta-xylanase A</fullName>
        <shortName>Xylanase A</shortName>
        <ecNumber>3.2.1.8</ecNumber>
    </recommendedName>
    <alternativeName>
        <fullName>1,4-beta-D-xylan xylanohydrolase A</fullName>
    </alternativeName>
</protein>
<accession>A1CCU0</accession>
<proteinExistence type="inferred from homology"/>
<gene>
    <name type="primary">xlnA</name>
    <name type="ORF">ACLA_063140</name>
</gene>
<comment type="function">
    <text evidence="1">Endo-1,4-beta-xylanase involved in the hydrolysis of xylan, a major structural heterogeneous polysaccharide found in plant biomass representing the second most abundant polysaccharide in the biosphere, after cellulose.</text>
</comment>
<comment type="catalytic activity">
    <reaction>
        <text>Endohydrolysis of (1-&gt;4)-beta-D-xylosidic linkages in xylans.</text>
        <dbReference type="EC" id="3.2.1.8"/>
    </reaction>
</comment>
<comment type="pathway">
    <text>Glycan degradation; xylan degradation.</text>
</comment>
<comment type="subcellular location">
    <subcellularLocation>
        <location evidence="1">Secreted</location>
    </subcellularLocation>
</comment>
<comment type="similarity">
    <text evidence="6">Belongs to the glycosyl hydrolase 11 (cellulase G) family.</text>
</comment>
<reference key="1">
    <citation type="journal article" date="2008" name="PLoS Genet.">
        <title>Genomic islands in the pathogenic filamentous fungus Aspergillus fumigatus.</title>
        <authorList>
            <person name="Fedorova N.D."/>
            <person name="Khaldi N."/>
            <person name="Joardar V.S."/>
            <person name="Maiti R."/>
            <person name="Amedeo P."/>
            <person name="Anderson M.J."/>
            <person name="Crabtree J."/>
            <person name="Silva J.C."/>
            <person name="Badger J.H."/>
            <person name="Albarraq A."/>
            <person name="Angiuoli S."/>
            <person name="Bussey H."/>
            <person name="Bowyer P."/>
            <person name="Cotty P.J."/>
            <person name="Dyer P.S."/>
            <person name="Egan A."/>
            <person name="Galens K."/>
            <person name="Fraser-Liggett C.M."/>
            <person name="Haas B.J."/>
            <person name="Inman J.M."/>
            <person name="Kent R."/>
            <person name="Lemieux S."/>
            <person name="Malavazi I."/>
            <person name="Orvis J."/>
            <person name="Roemer T."/>
            <person name="Ronning C.M."/>
            <person name="Sundaram J.P."/>
            <person name="Sutton G."/>
            <person name="Turner G."/>
            <person name="Venter J.C."/>
            <person name="White O.R."/>
            <person name="Whitty B.R."/>
            <person name="Youngman P."/>
            <person name="Wolfe K.H."/>
            <person name="Goldman G.H."/>
            <person name="Wortman J.R."/>
            <person name="Jiang B."/>
            <person name="Denning D.W."/>
            <person name="Nierman W.C."/>
        </authorList>
    </citation>
    <scope>NUCLEOTIDE SEQUENCE [LARGE SCALE GENOMIC DNA]</scope>
    <source>
        <strain>ATCC 1007 / CBS 513.65 / DSM 816 / NCTC 3887 / NRRL 1 / QM 1276 / 107</strain>
    </source>
</reference>
<name>XYNA_ASPCL</name>